<sequence>MIGRLCGTAEQIEDGRCLIDVSGVGYVVFCSARSLAALPAPPARATLLVETQVREDAITLFGFIDAAERDWFRLLTTIQGVGAKVALNLLSALPPDQLASAIAASDRGAITRAPGVGPKLAARLISELRERIAAMPTGSAFIPTGTAPPVAPPQGKLADALSALVNLGYRRAEAEAALSAVQAEAGEDAALDELIRGGLRRLAR</sequence>
<accession>A5G2L3</accession>
<reference key="1">
    <citation type="submission" date="2007-05" db="EMBL/GenBank/DDBJ databases">
        <title>Complete sequence of chromosome of Acidiphilium cryptum JF-5.</title>
        <authorList>
            <consortium name="US DOE Joint Genome Institute"/>
            <person name="Copeland A."/>
            <person name="Lucas S."/>
            <person name="Lapidus A."/>
            <person name="Barry K."/>
            <person name="Detter J.C."/>
            <person name="Glavina del Rio T."/>
            <person name="Hammon N."/>
            <person name="Israni S."/>
            <person name="Dalin E."/>
            <person name="Tice H."/>
            <person name="Pitluck S."/>
            <person name="Sims D."/>
            <person name="Brettin T."/>
            <person name="Bruce D."/>
            <person name="Han C."/>
            <person name="Schmutz J."/>
            <person name="Larimer F."/>
            <person name="Land M."/>
            <person name="Hauser L."/>
            <person name="Kyrpides N."/>
            <person name="Kim E."/>
            <person name="Magnuson T."/>
            <person name="Richardson P."/>
        </authorList>
    </citation>
    <scope>NUCLEOTIDE SEQUENCE [LARGE SCALE GENOMIC DNA]</scope>
    <source>
        <strain>JF-5</strain>
    </source>
</reference>
<dbReference type="EMBL" id="CP000697">
    <property type="protein sequence ID" value="ABQ32095.1"/>
    <property type="molecule type" value="Genomic_DNA"/>
</dbReference>
<dbReference type="RefSeq" id="WP_012040399.1">
    <property type="nucleotide sequence ID" value="NC_009484.1"/>
</dbReference>
<dbReference type="SMR" id="A5G2L3"/>
<dbReference type="STRING" id="349163.Acry_2905"/>
<dbReference type="KEGG" id="acr:Acry_2905"/>
<dbReference type="eggNOG" id="COG0632">
    <property type="taxonomic scope" value="Bacteria"/>
</dbReference>
<dbReference type="HOGENOM" id="CLU_087936_3_0_5"/>
<dbReference type="Proteomes" id="UP000000245">
    <property type="component" value="Chromosome"/>
</dbReference>
<dbReference type="GO" id="GO:0005737">
    <property type="term" value="C:cytoplasm"/>
    <property type="evidence" value="ECO:0007669"/>
    <property type="project" value="UniProtKB-SubCell"/>
</dbReference>
<dbReference type="GO" id="GO:0009379">
    <property type="term" value="C:Holliday junction helicase complex"/>
    <property type="evidence" value="ECO:0007669"/>
    <property type="project" value="InterPro"/>
</dbReference>
<dbReference type="GO" id="GO:0048476">
    <property type="term" value="C:Holliday junction resolvase complex"/>
    <property type="evidence" value="ECO:0007669"/>
    <property type="project" value="UniProtKB-UniRule"/>
</dbReference>
<dbReference type="GO" id="GO:0005524">
    <property type="term" value="F:ATP binding"/>
    <property type="evidence" value="ECO:0007669"/>
    <property type="project" value="InterPro"/>
</dbReference>
<dbReference type="GO" id="GO:0000400">
    <property type="term" value="F:four-way junction DNA binding"/>
    <property type="evidence" value="ECO:0007669"/>
    <property type="project" value="UniProtKB-UniRule"/>
</dbReference>
<dbReference type="GO" id="GO:0009378">
    <property type="term" value="F:four-way junction helicase activity"/>
    <property type="evidence" value="ECO:0007669"/>
    <property type="project" value="InterPro"/>
</dbReference>
<dbReference type="GO" id="GO:0006310">
    <property type="term" value="P:DNA recombination"/>
    <property type="evidence" value="ECO:0007669"/>
    <property type="project" value="UniProtKB-UniRule"/>
</dbReference>
<dbReference type="GO" id="GO:0006281">
    <property type="term" value="P:DNA repair"/>
    <property type="evidence" value="ECO:0007669"/>
    <property type="project" value="UniProtKB-UniRule"/>
</dbReference>
<dbReference type="CDD" id="cd14332">
    <property type="entry name" value="UBA_RuvA_C"/>
    <property type="match status" value="1"/>
</dbReference>
<dbReference type="Gene3D" id="1.10.150.20">
    <property type="entry name" value="5' to 3' exonuclease, C-terminal subdomain"/>
    <property type="match status" value="1"/>
</dbReference>
<dbReference type="Gene3D" id="1.10.8.10">
    <property type="entry name" value="DNA helicase RuvA subunit, C-terminal domain"/>
    <property type="match status" value="1"/>
</dbReference>
<dbReference type="Gene3D" id="2.40.50.140">
    <property type="entry name" value="Nucleic acid-binding proteins"/>
    <property type="match status" value="1"/>
</dbReference>
<dbReference type="HAMAP" id="MF_00031">
    <property type="entry name" value="DNA_HJ_migration_RuvA"/>
    <property type="match status" value="1"/>
</dbReference>
<dbReference type="InterPro" id="IPR013849">
    <property type="entry name" value="DNA_helicase_Holl-junc_RuvA_I"/>
</dbReference>
<dbReference type="InterPro" id="IPR003583">
    <property type="entry name" value="Hlx-hairpin-Hlx_DNA-bd_motif"/>
</dbReference>
<dbReference type="InterPro" id="IPR012340">
    <property type="entry name" value="NA-bd_OB-fold"/>
</dbReference>
<dbReference type="InterPro" id="IPR000085">
    <property type="entry name" value="RuvA"/>
</dbReference>
<dbReference type="InterPro" id="IPR010994">
    <property type="entry name" value="RuvA_2-like"/>
</dbReference>
<dbReference type="InterPro" id="IPR011114">
    <property type="entry name" value="RuvA_C"/>
</dbReference>
<dbReference type="InterPro" id="IPR036267">
    <property type="entry name" value="RuvA_C_sf"/>
</dbReference>
<dbReference type="NCBIfam" id="TIGR00084">
    <property type="entry name" value="ruvA"/>
    <property type="match status" value="1"/>
</dbReference>
<dbReference type="Pfam" id="PF14520">
    <property type="entry name" value="HHH_5"/>
    <property type="match status" value="1"/>
</dbReference>
<dbReference type="Pfam" id="PF07499">
    <property type="entry name" value="RuvA_C"/>
    <property type="match status" value="1"/>
</dbReference>
<dbReference type="Pfam" id="PF01330">
    <property type="entry name" value="RuvA_N"/>
    <property type="match status" value="1"/>
</dbReference>
<dbReference type="SMART" id="SM00278">
    <property type="entry name" value="HhH1"/>
    <property type="match status" value="2"/>
</dbReference>
<dbReference type="SUPFAM" id="SSF46929">
    <property type="entry name" value="DNA helicase RuvA subunit, C-terminal domain"/>
    <property type="match status" value="1"/>
</dbReference>
<dbReference type="SUPFAM" id="SSF50249">
    <property type="entry name" value="Nucleic acid-binding proteins"/>
    <property type="match status" value="1"/>
</dbReference>
<dbReference type="SUPFAM" id="SSF47781">
    <property type="entry name" value="RuvA domain 2-like"/>
    <property type="match status" value="1"/>
</dbReference>
<feature type="chain" id="PRO_1000002384" description="Holliday junction branch migration complex subunit RuvA">
    <location>
        <begin position="1"/>
        <end position="204"/>
    </location>
</feature>
<feature type="region of interest" description="Domain I" evidence="1">
    <location>
        <begin position="1"/>
        <end position="64"/>
    </location>
</feature>
<feature type="region of interest" description="Domain II" evidence="1">
    <location>
        <begin position="65"/>
        <end position="143"/>
    </location>
</feature>
<feature type="region of interest" description="Flexible linker" evidence="1">
    <location>
        <begin position="144"/>
        <end position="154"/>
    </location>
</feature>
<feature type="region of interest" description="Domain III" evidence="1">
    <location>
        <begin position="154"/>
        <end position="204"/>
    </location>
</feature>
<proteinExistence type="inferred from homology"/>
<name>RUVA_ACICJ</name>
<gene>
    <name evidence="1" type="primary">ruvA</name>
    <name type="ordered locus">Acry_2905</name>
</gene>
<keyword id="KW-0963">Cytoplasm</keyword>
<keyword id="KW-0227">DNA damage</keyword>
<keyword id="KW-0233">DNA recombination</keyword>
<keyword id="KW-0234">DNA repair</keyword>
<keyword id="KW-0238">DNA-binding</keyword>
<keyword id="KW-1185">Reference proteome</keyword>
<comment type="function">
    <text evidence="1">The RuvA-RuvB-RuvC complex processes Holliday junction (HJ) DNA during genetic recombination and DNA repair, while the RuvA-RuvB complex plays an important role in the rescue of blocked DNA replication forks via replication fork reversal (RFR). RuvA specifically binds to HJ cruciform DNA, conferring on it an open structure. The RuvB hexamer acts as an ATP-dependent pump, pulling dsDNA into and through the RuvAB complex. HJ branch migration allows RuvC to scan DNA until it finds its consensus sequence, where it cleaves and resolves the cruciform DNA.</text>
</comment>
<comment type="subunit">
    <text evidence="1">Homotetramer. Forms an RuvA(8)-RuvB(12)-Holliday junction (HJ) complex. HJ DNA is sandwiched between 2 RuvA tetramers; dsDNA enters through RuvA and exits via RuvB. An RuvB hexamer assembles on each DNA strand where it exits the tetramer. Each RuvB hexamer is contacted by two RuvA subunits (via domain III) on 2 adjacent RuvB subunits; this complex drives branch migration. In the full resolvosome a probable DNA-RuvA(4)-RuvB(12)-RuvC(2) complex forms which resolves the HJ.</text>
</comment>
<comment type="subcellular location">
    <subcellularLocation>
        <location evidence="1">Cytoplasm</location>
    </subcellularLocation>
</comment>
<comment type="domain">
    <text evidence="1">Has three domains with a flexible linker between the domains II and III and assumes an 'L' shape. Domain III is highly mobile and contacts RuvB.</text>
</comment>
<comment type="similarity">
    <text evidence="1">Belongs to the RuvA family.</text>
</comment>
<protein>
    <recommendedName>
        <fullName evidence="1">Holliday junction branch migration complex subunit RuvA</fullName>
    </recommendedName>
</protein>
<organism>
    <name type="scientific">Acidiphilium cryptum (strain JF-5)</name>
    <dbReference type="NCBI Taxonomy" id="349163"/>
    <lineage>
        <taxon>Bacteria</taxon>
        <taxon>Pseudomonadati</taxon>
        <taxon>Pseudomonadota</taxon>
        <taxon>Alphaproteobacteria</taxon>
        <taxon>Acetobacterales</taxon>
        <taxon>Acidocellaceae</taxon>
        <taxon>Acidiphilium</taxon>
    </lineage>
</organism>
<evidence type="ECO:0000255" key="1">
    <source>
        <dbReference type="HAMAP-Rule" id="MF_00031"/>
    </source>
</evidence>